<feature type="chain" id="PRO_0000098970" description="Tryptophan synthase beta chain">
    <location>
        <begin position="1"/>
        <end position="421"/>
    </location>
</feature>
<feature type="modified residue" description="N6-(pyridoxal phosphate)lysine" evidence="1">
    <location>
        <position position="112"/>
    </location>
</feature>
<protein>
    <recommendedName>
        <fullName>Tryptophan synthase beta chain</fullName>
        <ecNumber>4.2.1.20</ecNumber>
    </recommendedName>
</protein>
<dbReference type="EC" id="4.2.1.20"/>
<dbReference type="EMBL" id="LT708304">
    <property type="protein sequence ID" value="SIU00242.1"/>
    <property type="status" value="ALT_INIT"/>
    <property type="molecule type" value="Genomic_DNA"/>
</dbReference>
<dbReference type="RefSeq" id="NP_855291.1">
    <property type="nucleotide sequence ID" value="NC_002945.3"/>
</dbReference>
<dbReference type="RefSeq" id="WP_016721143.1">
    <property type="nucleotide sequence ID" value="NC_002945.4"/>
</dbReference>
<dbReference type="SMR" id="P66985"/>
<dbReference type="GeneID" id="45425580"/>
<dbReference type="KEGG" id="mbo:BQ2027_MB1638"/>
<dbReference type="PATRIC" id="fig|233413.5.peg.1787"/>
<dbReference type="UniPathway" id="UPA00035">
    <property type="reaction ID" value="UER00044"/>
</dbReference>
<dbReference type="Proteomes" id="UP000001419">
    <property type="component" value="Chromosome"/>
</dbReference>
<dbReference type="GO" id="GO:0005737">
    <property type="term" value="C:cytoplasm"/>
    <property type="evidence" value="ECO:0007669"/>
    <property type="project" value="TreeGrafter"/>
</dbReference>
<dbReference type="GO" id="GO:0004834">
    <property type="term" value="F:tryptophan synthase activity"/>
    <property type="evidence" value="ECO:0007669"/>
    <property type="project" value="UniProtKB-UniRule"/>
</dbReference>
<dbReference type="CDD" id="cd06446">
    <property type="entry name" value="Trp-synth_B"/>
    <property type="match status" value="1"/>
</dbReference>
<dbReference type="FunFam" id="3.40.50.1100:FF:000001">
    <property type="entry name" value="Tryptophan synthase beta chain"/>
    <property type="match status" value="1"/>
</dbReference>
<dbReference type="FunFam" id="3.40.50.1100:FF:000004">
    <property type="entry name" value="Tryptophan synthase beta chain"/>
    <property type="match status" value="1"/>
</dbReference>
<dbReference type="Gene3D" id="3.40.50.1100">
    <property type="match status" value="2"/>
</dbReference>
<dbReference type="HAMAP" id="MF_00133">
    <property type="entry name" value="Trp_synth_beta"/>
    <property type="match status" value="1"/>
</dbReference>
<dbReference type="InterPro" id="IPR006653">
    <property type="entry name" value="Trp_synth_b_CS"/>
</dbReference>
<dbReference type="InterPro" id="IPR006654">
    <property type="entry name" value="Trp_synth_beta"/>
</dbReference>
<dbReference type="InterPro" id="IPR023026">
    <property type="entry name" value="Trp_synth_beta/beta-like"/>
</dbReference>
<dbReference type="InterPro" id="IPR001926">
    <property type="entry name" value="TrpB-like_PALP"/>
</dbReference>
<dbReference type="InterPro" id="IPR036052">
    <property type="entry name" value="TrpB-like_PALP_sf"/>
</dbReference>
<dbReference type="NCBIfam" id="TIGR00263">
    <property type="entry name" value="trpB"/>
    <property type="match status" value="1"/>
</dbReference>
<dbReference type="PANTHER" id="PTHR48077:SF3">
    <property type="entry name" value="TRYPTOPHAN SYNTHASE"/>
    <property type="match status" value="1"/>
</dbReference>
<dbReference type="PANTHER" id="PTHR48077">
    <property type="entry name" value="TRYPTOPHAN SYNTHASE-RELATED"/>
    <property type="match status" value="1"/>
</dbReference>
<dbReference type="Pfam" id="PF00291">
    <property type="entry name" value="PALP"/>
    <property type="match status" value="1"/>
</dbReference>
<dbReference type="PIRSF" id="PIRSF001413">
    <property type="entry name" value="Trp_syn_beta"/>
    <property type="match status" value="1"/>
</dbReference>
<dbReference type="SUPFAM" id="SSF53686">
    <property type="entry name" value="Tryptophan synthase beta subunit-like PLP-dependent enzymes"/>
    <property type="match status" value="1"/>
</dbReference>
<dbReference type="PROSITE" id="PS00168">
    <property type="entry name" value="TRP_SYNTHASE_BETA"/>
    <property type="match status" value="1"/>
</dbReference>
<comment type="function">
    <text evidence="1">The beta subunit is responsible for the synthesis of L-tryptophan from indole and L-serine.</text>
</comment>
<comment type="catalytic activity">
    <reaction>
        <text>(1S,2R)-1-C-(indol-3-yl)glycerol 3-phosphate + L-serine = D-glyceraldehyde 3-phosphate + L-tryptophan + H2O</text>
        <dbReference type="Rhea" id="RHEA:10532"/>
        <dbReference type="ChEBI" id="CHEBI:15377"/>
        <dbReference type="ChEBI" id="CHEBI:33384"/>
        <dbReference type="ChEBI" id="CHEBI:57912"/>
        <dbReference type="ChEBI" id="CHEBI:58866"/>
        <dbReference type="ChEBI" id="CHEBI:59776"/>
        <dbReference type="EC" id="4.2.1.20"/>
    </reaction>
</comment>
<comment type="cofactor">
    <cofactor evidence="1">
        <name>pyridoxal 5'-phosphate</name>
        <dbReference type="ChEBI" id="CHEBI:597326"/>
    </cofactor>
</comment>
<comment type="pathway">
    <text>Amino-acid biosynthesis; L-tryptophan biosynthesis; L-tryptophan from chorismate: step 5/5.</text>
</comment>
<comment type="subunit">
    <text evidence="1">Tetramer of two alpha and two beta chains.</text>
</comment>
<comment type="similarity">
    <text evidence="3">Belongs to the TrpB family.</text>
</comment>
<comment type="sequence caution" evidence="2">
    <conflict type="erroneous initiation">
        <sequence resource="EMBL-CDS" id="SIU00242"/>
    </conflict>
    <text>Truncated N-terminus.</text>
</comment>
<proteinExistence type="inferred from homology"/>
<accession>P66985</accession>
<accession>A0A1R3XYT6</accession>
<accession>O08376</accession>
<accession>X2BI05</accession>
<sequence>MTDLSTPDLPRMSAAIAEPTSHDPDSGGHFGGPSGWGGRYVPEALMAVIEEVTAAYQKERVSQDFLDDLDRLQANYAGRPSPLYEATRLSQHAGSARIFLKREDLNHTGSHKINNVLGQALLARRMGKTRVIAETGAGQHGVATATACALLGLDCVIYMGGIDTARQALNVARMRLLGAEVVAVQTGSKTLKDAINEAFRDWVANADNTYYCFGTAAGPHPFPTMVRDFQRIIGMEARVQIQGQAGRLPDAVVACVGGGSNAIGIFHAFLDDPGVRLVGFEAAGDGVETGRHAATFTAGSPGAFHGSFSYLLQDEDGQTIESHSISAGLDYPGVGPEHAWLKEAGRVDYRPITDSEAMDAFGLLCRMEGIIPAIESAHAVAGALKLGVELGRGAVIVVNLSGRGDKDVETAAKWFGLLGND</sequence>
<organism>
    <name type="scientific">Mycobacterium bovis (strain ATCC BAA-935 / AF2122/97)</name>
    <dbReference type="NCBI Taxonomy" id="233413"/>
    <lineage>
        <taxon>Bacteria</taxon>
        <taxon>Bacillati</taxon>
        <taxon>Actinomycetota</taxon>
        <taxon>Actinomycetes</taxon>
        <taxon>Mycobacteriales</taxon>
        <taxon>Mycobacteriaceae</taxon>
        <taxon>Mycobacterium</taxon>
        <taxon>Mycobacterium tuberculosis complex</taxon>
    </lineage>
</organism>
<keyword id="KW-0028">Amino-acid biosynthesis</keyword>
<keyword id="KW-0057">Aromatic amino acid biosynthesis</keyword>
<keyword id="KW-0456">Lyase</keyword>
<keyword id="KW-0663">Pyridoxal phosphate</keyword>
<keyword id="KW-1185">Reference proteome</keyword>
<keyword id="KW-0822">Tryptophan biosynthesis</keyword>
<reference key="1">
    <citation type="journal article" date="2003" name="Proc. Natl. Acad. Sci. U.S.A.">
        <title>The complete genome sequence of Mycobacterium bovis.</title>
        <authorList>
            <person name="Garnier T."/>
            <person name="Eiglmeier K."/>
            <person name="Camus J.-C."/>
            <person name="Medina N."/>
            <person name="Mansoor H."/>
            <person name="Pryor M."/>
            <person name="Duthoy S."/>
            <person name="Grondin S."/>
            <person name="Lacroix C."/>
            <person name="Monsempe C."/>
            <person name="Simon S."/>
            <person name="Harris B."/>
            <person name="Atkin R."/>
            <person name="Doggett J."/>
            <person name="Mayes R."/>
            <person name="Keating L."/>
            <person name="Wheeler P.R."/>
            <person name="Parkhill J."/>
            <person name="Barrell B.G."/>
            <person name="Cole S.T."/>
            <person name="Gordon S.V."/>
            <person name="Hewinson R.G."/>
        </authorList>
    </citation>
    <scope>NUCLEOTIDE SEQUENCE [LARGE SCALE GENOMIC DNA]</scope>
    <source>
        <strain>ATCC BAA-935 / AF2122/97</strain>
    </source>
</reference>
<reference key="2">
    <citation type="journal article" date="2017" name="Genome Announc.">
        <title>Updated reference genome sequence and annotation of Mycobacterium bovis AF2122/97.</title>
        <authorList>
            <person name="Malone K.M."/>
            <person name="Farrell D."/>
            <person name="Stuber T.P."/>
            <person name="Schubert O.T."/>
            <person name="Aebersold R."/>
            <person name="Robbe-Austerman S."/>
            <person name="Gordon S.V."/>
        </authorList>
    </citation>
    <scope>NUCLEOTIDE SEQUENCE [LARGE SCALE GENOMIC DNA]</scope>
    <scope>GENOME REANNOTATION</scope>
    <source>
        <strain>ATCC BAA-935 / AF2122/97</strain>
    </source>
</reference>
<evidence type="ECO:0000250" key="1"/>
<evidence type="ECO:0000250" key="2">
    <source>
        <dbReference type="UniProtKB" id="P9WFX9"/>
    </source>
</evidence>
<evidence type="ECO:0000305" key="3"/>
<name>TRPB_MYCBO</name>
<gene>
    <name type="primary">trpB</name>
    <name type="ordered locus">BQ2027_MB1638</name>
</gene>